<sequence>MAAHGGGGVEEDQAGSSSLCPPAAEAEAAAAAAAIARAARPPRPGRDKRLGVRHPLKHRRFRAGGKAAVAAGAREVGEATTVAEATATGPPKGSDEDDEARYICGGWTSDDGRMSCGYSSFRGRRANMEDFYDIKSSKVDDNQINLFGIFDGHGGSHAAEHLKKHLFENLLKHPSFITDTKSAISETYRKTDSDFLDAETNINREDGSTASTAIFVGNHIYVANVGDSRTVMSKAGKAIALSSDHKPNRKDERKRIENAGGVVTWSGTWRVGGVLAMSRAFGNRFLKRFVVAEPEVQEQEIDDDLEFLILASDGLWDVVSNEHAVAFVKAEEGPEAAARKLAEIAFARGSTDNITCIVVKFLHAKMAVDAASSSERS</sequence>
<name>P2C07_ORYSJ</name>
<protein>
    <recommendedName>
        <fullName>Probable protein phosphatase 2C 7</fullName>
        <shortName>OsPP2C07</shortName>
        <ecNumber>3.1.3.16</ecNumber>
    </recommendedName>
</protein>
<organism>
    <name type="scientific">Oryza sativa subsp. japonica</name>
    <name type="common">Rice</name>
    <dbReference type="NCBI Taxonomy" id="39947"/>
    <lineage>
        <taxon>Eukaryota</taxon>
        <taxon>Viridiplantae</taxon>
        <taxon>Streptophyta</taxon>
        <taxon>Embryophyta</taxon>
        <taxon>Tracheophyta</taxon>
        <taxon>Spermatophyta</taxon>
        <taxon>Magnoliopsida</taxon>
        <taxon>Liliopsida</taxon>
        <taxon>Poales</taxon>
        <taxon>Poaceae</taxon>
        <taxon>BOP clade</taxon>
        <taxon>Oryzoideae</taxon>
        <taxon>Oryzeae</taxon>
        <taxon>Oryzinae</taxon>
        <taxon>Oryza</taxon>
        <taxon>Oryza sativa</taxon>
    </lineage>
</organism>
<accession>Q0JL75</accession>
<gene>
    <name type="ordered locus">Os01g0618200</name>
    <name type="ordered locus">LOC_Os01g43100</name>
</gene>
<keyword id="KW-0378">Hydrolase</keyword>
<keyword id="KW-0460">Magnesium</keyword>
<keyword id="KW-0464">Manganese</keyword>
<keyword id="KW-0479">Metal-binding</keyword>
<keyword id="KW-0904">Protein phosphatase</keyword>
<keyword id="KW-1185">Reference proteome</keyword>
<reference key="1">
    <citation type="journal article" date="2005" name="Nature">
        <title>The map-based sequence of the rice genome.</title>
        <authorList>
            <consortium name="International rice genome sequencing project (IRGSP)"/>
        </authorList>
    </citation>
    <scope>NUCLEOTIDE SEQUENCE [LARGE SCALE GENOMIC DNA]</scope>
    <source>
        <strain>cv. Nipponbare</strain>
    </source>
</reference>
<reference key="2">
    <citation type="journal article" date="2008" name="Nucleic Acids Res.">
        <title>The rice annotation project database (RAP-DB): 2008 update.</title>
        <authorList>
            <consortium name="The rice annotation project (RAP)"/>
        </authorList>
    </citation>
    <scope>GENOME REANNOTATION</scope>
    <source>
        <strain>cv. Nipponbare</strain>
    </source>
</reference>
<reference key="3">
    <citation type="journal article" date="2013" name="Rice">
        <title>Improvement of the Oryza sativa Nipponbare reference genome using next generation sequence and optical map data.</title>
        <authorList>
            <person name="Kawahara Y."/>
            <person name="de la Bastide M."/>
            <person name="Hamilton J.P."/>
            <person name="Kanamori H."/>
            <person name="McCombie W.R."/>
            <person name="Ouyang S."/>
            <person name="Schwartz D.C."/>
            <person name="Tanaka T."/>
            <person name="Wu J."/>
            <person name="Zhou S."/>
            <person name="Childs K.L."/>
            <person name="Davidson R.M."/>
            <person name="Lin H."/>
            <person name="Quesada-Ocampo L."/>
            <person name="Vaillancourt B."/>
            <person name="Sakai H."/>
            <person name="Lee S.S."/>
            <person name="Kim J."/>
            <person name="Numa H."/>
            <person name="Itoh T."/>
            <person name="Buell C.R."/>
            <person name="Matsumoto T."/>
        </authorList>
    </citation>
    <scope>GENOME REANNOTATION</scope>
    <source>
        <strain>cv. Nipponbare</strain>
    </source>
</reference>
<reference key="4">
    <citation type="journal article" date="2003" name="Science">
        <title>Collection, mapping, and annotation of over 28,000 cDNA clones from japonica rice.</title>
        <authorList>
            <consortium name="The rice full-length cDNA consortium"/>
        </authorList>
    </citation>
    <scope>NUCLEOTIDE SEQUENCE [LARGE SCALE MRNA]</scope>
    <source>
        <strain>cv. Nipponbare</strain>
    </source>
</reference>
<reference key="5">
    <citation type="journal article" date="2008" name="BMC Genomics">
        <title>Genome-wide and expression analysis of protein phosphatase 2C in rice and Arabidopsis.</title>
        <authorList>
            <person name="Xue T."/>
            <person name="Wang D."/>
            <person name="Zhang S."/>
            <person name="Ehlting J."/>
            <person name="Ni F."/>
            <person name="Jacab S."/>
            <person name="Zheng C."/>
            <person name="Zhong Y."/>
        </authorList>
    </citation>
    <scope>GENE FAMILY</scope>
    <scope>NOMENCLATURE</scope>
</reference>
<feature type="chain" id="PRO_0000363253" description="Probable protein phosphatase 2C 7">
    <location>
        <begin position="1"/>
        <end position="377"/>
    </location>
</feature>
<feature type="domain" description="PPM-type phosphatase" evidence="2">
    <location>
        <begin position="115"/>
        <end position="361"/>
    </location>
</feature>
<feature type="region of interest" description="Disordered" evidence="3">
    <location>
        <begin position="1"/>
        <end position="68"/>
    </location>
</feature>
<feature type="region of interest" description="Disordered" evidence="3">
    <location>
        <begin position="80"/>
        <end position="99"/>
    </location>
</feature>
<feature type="compositionally biased region" description="Low complexity" evidence="3">
    <location>
        <begin position="21"/>
        <end position="39"/>
    </location>
</feature>
<feature type="compositionally biased region" description="Basic residues" evidence="3">
    <location>
        <begin position="51"/>
        <end position="63"/>
    </location>
</feature>
<feature type="compositionally biased region" description="Low complexity" evidence="3">
    <location>
        <begin position="80"/>
        <end position="89"/>
    </location>
</feature>
<feature type="binding site" evidence="1">
    <location>
        <position position="151"/>
    </location>
    <ligand>
        <name>Mn(2+)</name>
        <dbReference type="ChEBI" id="CHEBI:29035"/>
        <label>1</label>
    </ligand>
</feature>
<feature type="binding site" evidence="1">
    <location>
        <position position="151"/>
    </location>
    <ligand>
        <name>Mn(2+)</name>
        <dbReference type="ChEBI" id="CHEBI:29035"/>
        <label>2</label>
    </ligand>
</feature>
<feature type="binding site" evidence="1">
    <location>
        <position position="152"/>
    </location>
    <ligand>
        <name>Mn(2+)</name>
        <dbReference type="ChEBI" id="CHEBI:29035"/>
        <label>1</label>
    </ligand>
</feature>
<feature type="binding site" evidence="1">
    <location>
        <position position="313"/>
    </location>
    <ligand>
        <name>Mn(2+)</name>
        <dbReference type="ChEBI" id="CHEBI:29035"/>
        <label>2</label>
    </ligand>
</feature>
<feature type="binding site" evidence="1">
    <location>
        <position position="352"/>
    </location>
    <ligand>
        <name>Mn(2+)</name>
        <dbReference type="ChEBI" id="CHEBI:29035"/>
        <label>2</label>
    </ligand>
</feature>
<feature type="sequence conflict" description="In Ref. 4; AK102319." evidence="4" ref="4">
    <location>
        <position position="166"/>
    </location>
</feature>
<proteinExistence type="evidence at transcript level"/>
<evidence type="ECO:0000250" key="1"/>
<evidence type="ECO:0000255" key="2">
    <source>
        <dbReference type="PROSITE-ProRule" id="PRU01082"/>
    </source>
</evidence>
<evidence type="ECO:0000256" key="3">
    <source>
        <dbReference type="SAM" id="MobiDB-lite"/>
    </source>
</evidence>
<evidence type="ECO:0000305" key="4"/>
<dbReference type="EC" id="3.1.3.16"/>
<dbReference type="EMBL" id="AP008207">
    <property type="protein sequence ID" value="BAF05503.1"/>
    <property type="status" value="ALT_SEQ"/>
    <property type="molecule type" value="Genomic_DNA"/>
</dbReference>
<dbReference type="EMBL" id="AP014957">
    <property type="status" value="NOT_ANNOTATED_CDS"/>
    <property type="molecule type" value="Genomic_DNA"/>
</dbReference>
<dbReference type="EMBL" id="AK102319">
    <property type="status" value="NOT_ANNOTATED_CDS"/>
    <property type="molecule type" value="mRNA"/>
</dbReference>
<dbReference type="RefSeq" id="XP_015622179.1">
    <property type="nucleotide sequence ID" value="XM_015766693.1"/>
</dbReference>
<dbReference type="SMR" id="Q0JL75"/>
<dbReference type="FunCoup" id="Q0JL75">
    <property type="interactions" value="332"/>
</dbReference>
<dbReference type="STRING" id="39947.Q0JL75"/>
<dbReference type="PaxDb" id="39947-Q0JL75"/>
<dbReference type="eggNOG" id="KOG0698">
    <property type="taxonomic scope" value="Eukaryota"/>
</dbReference>
<dbReference type="InParanoid" id="Q0JL75"/>
<dbReference type="OrthoDB" id="10264738at2759"/>
<dbReference type="Proteomes" id="UP000000763">
    <property type="component" value="Chromosome 1"/>
</dbReference>
<dbReference type="Proteomes" id="UP000059680">
    <property type="component" value="Chromosome 1"/>
</dbReference>
<dbReference type="GO" id="GO:0046872">
    <property type="term" value="F:metal ion binding"/>
    <property type="evidence" value="ECO:0007669"/>
    <property type="project" value="UniProtKB-KW"/>
</dbReference>
<dbReference type="GO" id="GO:0004722">
    <property type="term" value="F:protein serine/threonine phosphatase activity"/>
    <property type="evidence" value="ECO:0007669"/>
    <property type="project" value="UniProtKB-EC"/>
</dbReference>
<dbReference type="GO" id="GO:0007165">
    <property type="term" value="P:signal transduction"/>
    <property type="evidence" value="ECO:0000318"/>
    <property type="project" value="GO_Central"/>
</dbReference>
<dbReference type="CDD" id="cd00143">
    <property type="entry name" value="PP2Cc"/>
    <property type="match status" value="1"/>
</dbReference>
<dbReference type="FunFam" id="3.60.40.10:FF:000027">
    <property type="entry name" value="Probable protein phosphatase 2C 76"/>
    <property type="match status" value="1"/>
</dbReference>
<dbReference type="Gene3D" id="3.60.40.10">
    <property type="entry name" value="PPM-type phosphatase domain"/>
    <property type="match status" value="1"/>
</dbReference>
<dbReference type="InterPro" id="IPR015655">
    <property type="entry name" value="PP2C"/>
</dbReference>
<dbReference type="InterPro" id="IPR000222">
    <property type="entry name" value="PP2C_BS"/>
</dbReference>
<dbReference type="InterPro" id="IPR036457">
    <property type="entry name" value="PPM-type-like_dom_sf"/>
</dbReference>
<dbReference type="InterPro" id="IPR001932">
    <property type="entry name" value="PPM-type_phosphatase-like_dom"/>
</dbReference>
<dbReference type="PANTHER" id="PTHR47992">
    <property type="entry name" value="PROTEIN PHOSPHATASE"/>
    <property type="match status" value="1"/>
</dbReference>
<dbReference type="Pfam" id="PF00481">
    <property type="entry name" value="PP2C"/>
    <property type="match status" value="1"/>
</dbReference>
<dbReference type="SMART" id="SM00331">
    <property type="entry name" value="PP2C_SIG"/>
    <property type="match status" value="1"/>
</dbReference>
<dbReference type="SMART" id="SM00332">
    <property type="entry name" value="PP2Cc"/>
    <property type="match status" value="1"/>
</dbReference>
<dbReference type="SUPFAM" id="SSF81606">
    <property type="entry name" value="PP2C-like"/>
    <property type="match status" value="1"/>
</dbReference>
<dbReference type="PROSITE" id="PS01032">
    <property type="entry name" value="PPM_1"/>
    <property type="match status" value="1"/>
</dbReference>
<dbReference type="PROSITE" id="PS51746">
    <property type="entry name" value="PPM_2"/>
    <property type="match status" value="1"/>
</dbReference>
<comment type="catalytic activity">
    <reaction>
        <text>O-phospho-L-seryl-[protein] + H2O = L-seryl-[protein] + phosphate</text>
        <dbReference type="Rhea" id="RHEA:20629"/>
        <dbReference type="Rhea" id="RHEA-COMP:9863"/>
        <dbReference type="Rhea" id="RHEA-COMP:11604"/>
        <dbReference type="ChEBI" id="CHEBI:15377"/>
        <dbReference type="ChEBI" id="CHEBI:29999"/>
        <dbReference type="ChEBI" id="CHEBI:43474"/>
        <dbReference type="ChEBI" id="CHEBI:83421"/>
        <dbReference type="EC" id="3.1.3.16"/>
    </reaction>
</comment>
<comment type="catalytic activity">
    <reaction>
        <text>O-phospho-L-threonyl-[protein] + H2O = L-threonyl-[protein] + phosphate</text>
        <dbReference type="Rhea" id="RHEA:47004"/>
        <dbReference type="Rhea" id="RHEA-COMP:11060"/>
        <dbReference type="Rhea" id="RHEA-COMP:11605"/>
        <dbReference type="ChEBI" id="CHEBI:15377"/>
        <dbReference type="ChEBI" id="CHEBI:30013"/>
        <dbReference type="ChEBI" id="CHEBI:43474"/>
        <dbReference type="ChEBI" id="CHEBI:61977"/>
        <dbReference type="EC" id="3.1.3.16"/>
    </reaction>
</comment>
<comment type="cofactor">
    <cofactor evidence="1">
        <name>Mg(2+)</name>
        <dbReference type="ChEBI" id="CHEBI:18420"/>
    </cofactor>
    <cofactor evidence="1">
        <name>Mn(2+)</name>
        <dbReference type="ChEBI" id="CHEBI:29035"/>
    </cofactor>
    <text evidence="1">Binds 2 magnesium or manganese ions per subunit.</text>
</comment>
<comment type="similarity">
    <text evidence="4">Belongs to the PP2C family.</text>
</comment>
<comment type="sequence caution" evidence="4">
    <conflict type="frameshift">
        <sequence resource="EMBL" id="AK102319"/>
    </conflict>
</comment>
<comment type="sequence caution" evidence="4">
    <conflict type="erroneous gene model prediction">
        <sequence resource="EMBL-CDS" id="BAF05503"/>
    </conflict>
</comment>